<organism>
    <name type="scientific">Escherichia coli (strain K12 / MC4100 / BW2952)</name>
    <dbReference type="NCBI Taxonomy" id="595496"/>
    <lineage>
        <taxon>Bacteria</taxon>
        <taxon>Pseudomonadati</taxon>
        <taxon>Pseudomonadota</taxon>
        <taxon>Gammaproteobacteria</taxon>
        <taxon>Enterobacterales</taxon>
        <taxon>Enterobacteriaceae</taxon>
        <taxon>Escherichia</taxon>
    </lineage>
</organism>
<gene>
    <name evidence="1" type="primary">yaeH</name>
    <name type="ordered locus">BWG_0156</name>
</gene>
<dbReference type="EMBL" id="CP001396">
    <property type="protein sequence ID" value="ACR62266.1"/>
    <property type="molecule type" value="Genomic_DNA"/>
</dbReference>
<dbReference type="RefSeq" id="WP_000272188.1">
    <property type="nucleotide sequence ID" value="NC_012759.1"/>
</dbReference>
<dbReference type="SMR" id="C4ZRQ6"/>
<dbReference type="KEGG" id="ebw:BWG_0156"/>
<dbReference type="HOGENOM" id="CLU_136774_0_0_6"/>
<dbReference type="HAMAP" id="MF_01519">
    <property type="entry name" value="UPF0325"/>
    <property type="match status" value="1"/>
</dbReference>
<dbReference type="InterPro" id="IPR020911">
    <property type="entry name" value="UPF0325"/>
</dbReference>
<dbReference type="NCBIfam" id="NF010213">
    <property type="entry name" value="PRK13677.1"/>
    <property type="match status" value="1"/>
</dbReference>
<dbReference type="Pfam" id="PF11944">
    <property type="entry name" value="DUF3461"/>
    <property type="match status" value="1"/>
</dbReference>
<accession>C4ZRQ6</accession>
<comment type="similarity">
    <text evidence="1">Belongs to the UPF0325 family.</text>
</comment>
<protein>
    <recommendedName>
        <fullName evidence="1">UPF0325 protein YaeH</fullName>
    </recommendedName>
</protein>
<evidence type="ECO:0000255" key="1">
    <source>
        <dbReference type="HAMAP-Rule" id="MF_01519"/>
    </source>
</evidence>
<name>YAEH_ECOBW</name>
<reference key="1">
    <citation type="journal article" date="2009" name="J. Bacteriol.">
        <title>Genomic sequencing reveals regulatory mutations and recombinational events in the widely used MC4100 lineage of Escherichia coli K-12.</title>
        <authorList>
            <person name="Ferenci T."/>
            <person name="Zhou Z."/>
            <person name="Betteridge T."/>
            <person name="Ren Y."/>
            <person name="Liu Y."/>
            <person name="Feng L."/>
            <person name="Reeves P.R."/>
            <person name="Wang L."/>
        </authorList>
    </citation>
    <scope>NUCLEOTIDE SEQUENCE [LARGE SCALE GENOMIC DNA]</scope>
    <source>
        <strain>K12 / MC4100 / BW2952</strain>
    </source>
</reference>
<proteinExistence type="inferred from homology"/>
<sequence>MYDNLKSLGITNPEEIDRYSLRQEANNDILKIYFQKDKGEFFAKSVKFKYPRQRKTVVADGVGQGYKEVQEISPNLRYIIDELDQICQRDRSEVDLKRKILDDLRHLESVVTNKISEIEADLEKLTRK</sequence>
<feature type="chain" id="PRO_1000215364" description="UPF0325 protein YaeH">
    <location>
        <begin position="1"/>
        <end position="128"/>
    </location>
</feature>